<sequence>MKITLPPFDQARVLVAGDLMLDRYWHGGTDRISPEAPVPVVHVRDIEQRPGGAGNVALNVAALGGQPELVGITGQDEAANELASLLENAGVACHFRRQPGAATITKLRVISRHQQLIRLDFEDGFPGAHARDLLPQYRPLLAGCGAVVLSDYAKGALRDPRPLIEAAREAGVPVLADPKGRDFSIYRGATLITPNLAEFEAVVGRCADEDTLVRRGEALARECGIEALLVTRGEDGMSLVRPGEAPVHLAARAREVFDVTGAGDTVIATLATGLATGLALPQAMALANLAAGIVVGKLGTATVSVAELRRALQEQEQSGRGVLTEPELLHAVADARAHGERIVMTNGCFDLLHAGHVAYLEQARSRGDRLIVAVNDDASVRRLKGEGRPINPVQQRMAVLAGLASVDWVVPFSEDTPARVIGAVLPDVLVKGGDYQPEAIAGHDAVVAHGGRVEILDFLDGCSTSAMIERMQSAPDT</sequence>
<organism>
    <name type="scientific">Alkalilimnicola ehrlichii (strain ATCC BAA-1101 / DSM 17681 / MLHE-1)</name>
    <dbReference type="NCBI Taxonomy" id="187272"/>
    <lineage>
        <taxon>Bacteria</taxon>
        <taxon>Pseudomonadati</taxon>
        <taxon>Pseudomonadota</taxon>
        <taxon>Gammaproteobacteria</taxon>
        <taxon>Chromatiales</taxon>
        <taxon>Ectothiorhodospiraceae</taxon>
        <taxon>Alkalilimnicola</taxon>
    </lineage>
</organism>
<keyword id="KW-0067">ATP-binding</keyword>
<keyword id="KW-0119">Carbohydrate metabolism</keyword>
<keyword id="KW-0418">Kinase</keyword>
<keyword id="KW-0511">Multifunctional enzyme</keyword>
<keyword id="KW-0547">Nucleotide-binding</keyword>
<keyword id="KW-0548">Nucleotidyltransferase</keyword>
<keyword id="KW-1185">Reference proteome</keyword>
<keyword id="KW-0808">Transferase</keyword>
<accession>Q0A4T7</accession>
<protein>
    <recommendedName>
        <fullName evidence="1">Bifunctional protein HldE</fullName>
    </recommendedName>
    <domain>
        <recommendedName>
            <fullName evidence="1">D-beta-D-heptose 7-phosphate kinase</fullName>
            <ecNumber evidence="1">2.7.1.167</ecNumber>
        </recommendedName>
        <alternativeName>
            <fullName evidence="1">D-beta-D-heptose 7-phosphotransferase</fullName>
        </alternativeName>
        <alternativeName>
            <fullName evidence="1">D-glycero-beta-D-manno-heptose-7-phosphate kinase</fullName>
        </alternativeName>
    </domain>
    <domain>
        <recommendedName>
            <fullName evidence="1">D-beta-D-heptose 1-phosphate adenylyltransferase</fullName>
            <ecNumber evidence="1">2.7.7.70</ecNumber>
        </recommendedName>
        <alternativeName>
            <fullName evidence="1">D-glycero-beta-D-manno-heptose 1-phosphate adenylyltransferase</fullName>
        </alternativeName>
    </domain>
</protein>
<reference key="1">
    <citation type="submission" date="2006-08" db="EMBL/GenBank/DDBJ databases">
        <title>Complete sequence of Alkalilimnicola ehrilichei MLHE-1.</title>
        <authorList>
            <person name="Copeland A."/>
            <person name="Lucas S."/>
            <person name="Lapidus A."/>
            <person name="Barry K."/>
            <person name="Detter J.C."/>
            <person name="Glavina del Rio T."/>
            <person name="Hammon N."/>
            <person name="Israni S."/>
            <person name="Dalin E."/>
            <person name="Tice H."/>
            <person name="Pitluck S."/>
            <person name="Sims D."/>
            <person name="Brettin T."/>
            <person name="Bruce D."/>
            <person name="Han C."/>
            <person name="Tapia R."/>
            <person name="Gilna P."/>
            <person name="Schmutz J."/>
            <person name="Larimer F."/>
            <person name="Land M."/>
            <person name="Hauser L."/>
            <person name="Kyrpides N."/>
            <person name="Mikhailova N."/>
            <person name="Oremland R.S."/>
            <person name="Hoeft S.E."/>
            <person name="Switzer-Blum J."/>
            <person name="Kulp T."/>
            <person name="King G."/>
            <person name="Tabita R."/>
            <person name="Witte B."/>
            <person name="Santini J.M."/>
            <person name="Basu P."/>
            <person name="Hollibaugh J.T."/>
            <person name="Xie G."/>
            <person name="Stolz J.F."/>
            <person name="Richardson P."/>
        </authorList>
    </citation>
    <scope>NUCLEOTIDE SEQUENCE [LARGE SCALE GENOMIC DNA]</scope>
    <source>
        <strain>ATCC BAA-1101 / DSM 17681 / MLHE-1</strain>
    </source>
</reference>
<evidence type="ECO:0000255" key="1">
    <source>
        <dbReference type="HAMAP-Rule" id="MF_01603"/>
    </source>
</evidence>
<feature type="chain" id="PRO_0000291669" description="Bifunctional protein HldE">
    <location>
        <begin position="1"/>
        <end position="477"/>
    </location>
</feature>
<feature type="region of interest" description="Ribokinase">
    <location>
        <begin position="1"/>
        <end position="319"/>
    </location>
</feature>
<feature type="region of interest" description="Cytidylyltransferase">
    <location>
        <begin position="344"/>
        <end position="477"/>
    </location>
</feature>
<feature type="active site" evidence="1">
    <location>
        <position position="264"/>
    </location>
</feature>
<feature type="binding site" evidence="1">
    <location>
        <begin position="195"/>
        <end position="198"/>
    </location>
    <ligand>
        <name>ATP</name>
        <dbReference type="ChEBI" id="CHEBI:30616"/>
    </ligand>
</feature>
<gene>
    <name evidence="1" type="primary">hldE</name>
    <name type="ordered locus">Mlg_2810</name>
</gene>
<name>HLDE_ALKEH</name>
<proteinExistence type="inferred from homology"/>
<dbReference type="EC" id="2.7.1.167" evidence="1"/>
<dbReference type="EC" id="2.7.7.70" evidence="1"/>
<dbReference type="EMBL" id="CP000453">
    <property type="protein sequence ID" value="ABI58150.1"/>
    <property type="molecule type" value="Genomic_DNA"/>
</dbReference>
<dbReference type="RefSeq" id="WP_011630543.1">
    <property type="nucleotide sequence ID" value="NC_008340.1"/>
</dbReference>
<dbReference type="SMR" id="Q0A4T7"/>
<dbReference type="KEGG" id="aeh:Mlg_2810"/>
<dbReference type="eggNOG" id="COG0615">
    <property type="taxonomic scope" value="Bacteria"/>
</dbReference>
<dbReference type="eggNOG" id="COG2870">
    <property type="taxonomic scope" value="Bacteria"/>
</dbReference>
<dbReference type="HOGENOM" id="CLU_021150_2_1_6"/>
<dbReference type="OrthoDB" id="9802794at2"/>
<dbReference type="UniPathway" id="UPA00356">
    <property type="reaction ID" value="UER00437"/>
</dbReference>
<dbReference type="UniPathway" id="UPA00356">
    <property type="reaction ID" value="UER00439"/>
</dbReference>
<dbReference type="Proteomes" id="UP000001962">
    <property type="component" value="Chromosome"/>
</dbReference>
<dbReference type="GO" id="GO:0005829">
    <property type="term" value="C:cytosol"/>
    <property type="evidence" value="ECO:0007669"/>
    <property type="project" value="TreeGrafter"/>
</dbReference>
<dbReference type="GO" id="GO:0005524">
    <property type="term" value="F:ATP binding"/>
    <property type="evidence" value="ECO:0007669"/>
    <property type="project" value="UniProtKB-UniRule"/>
</dbReference>
<dbReference type="GO" id="GO:0033785">
    <property type="term" value="F:heptose 7-phosphate kinase activity"/>
    <property type="evidence" value="ECO:0007669"/>
    <property type="project" value="UniProtKB-UniRule"/>
</dbReference>
<dbReference type="GO" id="GO:0033786">
    <property type="term" value="F:heptose-1-phosphate adenylyltransferase activity"/>
    <property type="evidence" value="ECO:0007669"/>
    <property type="project" value="UniProtKB-UniRule"/>
</dbReference>
<dbReference type="GO" id="GO:0016773">
    <property type="term" value="F:phosphotransferase activity, alcohol group as acceptor"/>
    <property type="evidence" value="ECO:0007669"/>
    <property type="project" value="InterPro"/>
</dbReference>
<dbReference type="GO" id="GO:0097171">
    <property type="term" value="P:ADP-L-glycero-beta-D-manno-heptose biosynthetic process"/>
    <property type="evidence" value="ECO:0007669"/>
    <property type="project" value="UniProtKB-UniPathway"/>
</dbReference>
<dbReference type="CDD" id="cd01172">
    <property type="entry name" value="RfaE_like"/>
    <property type="match status" value="1"/>
</dbReference>
<dbReference type="FunFam" id="3.40.1190.20:FF:000002">
    <property type="entry name" value="Bifunctional protein HldE"/>
    <property type="match status" value="1"/>
</dbReference>
<dbReference type="FunFam" id="3.40.50.620:FF:000028">
    <property type="entry name" value="Bifunctional protein HldE"/>
    <property type="match status" value="1"/>
</dbReference>
<dbReference type="Gene3D" id="3.40.1190.20">
    <property type="match status" value="1"/>
</dbReference>
<dbReference type="Gene3D" id="3.40.50.620">
    <property type="entry name" value="HUPs"/>
    <property type="match status" value="1"/>
</dbReference>
<dbReference type="HAMAP" id="MF_01603">
    <property type="entry name" value="HldE"/>
    <property type="match status" value="1"/>
</dbReference>
<dbReference type="InterPro" id="IPR023030">
    <property type="entry name" value="Bifunc_HldE"/>
</dbReference>
<dbReference type="InterPro" id="IPR002173">
    <property type="entry name" value="Carboh/pur_kinase_PfkB_CS"/>
</dbReference>
<dbReference type="InterPro" id="IPR004821">
    <property type="entry name" value="Cyt_trans-like"/>
</dbReference>
<dbReference type="InterPro" id="IPR011611">
    <property type="entry name" value="PfkB_dom"/>
</dbReference>
<dbReference type="InterPro" id="IPR011913">
    <property type="entry name" value="RfaE_dom_I"/>
</dbReference>
<dbReference type="InterPro" id="IPR011914">
    <property type="entry name" value="RfaE_dom_II"/>
</dbReference>
<dbReference type="InterPro" id="IPR029056">
    <property type="entry name" value="Ribokinase-like"/>
</dbReference>
<dbReference type="InterPro" id="IPR014729">
    <property type="entry name" value="Rossmann-like_a/b/a_fold"/>
</dbReference>
<dbReference type="NCBIfam" id="TIGR00125">
    <property type="entry name" value="cyt_tran_rel"/>
    <property type="match status" value="1"/>
</dbReference>
<dbReference type="NCBIfam" id="NF008454">
    <property type="entry name" value="PRK11316.1"/>
    <property type="match status" value="1"/>
</dbReference>
<dbReference type="NCBIfam" id="TIGR02198">
    <property type="entry name" value="rfaE_dom_I"/>
    <property type="match status" value="1"/>
</dbReference>
<dbReference type="NCBIfam" id="TIGR02199">
    <property type="entry name" value="rfaE_dom_II"/>
    <property type="match status" value="1"/>
</dbReference>
<dbReference type="PANTHER" id="PTHR46969">
    <property type="entry name" value="BIFUNCTIONAL PROTEIN HLDE"/>
    <property type="match status" value="1"/>
</dbReference>
<dbReference type="PANTHER" id="PTHR46969:SF1">
    <property type="entry name" value="BIFUNCTIONAL PROTEIN HLDE"/>
    <property type="match status" value="1"/>
</dbReference>
<dbReference type="Pfam" id="PF01467">
    <property type="entry name" value="CTP_transf_like"/>
    <property type="match status" value="1"/>
</dbReference>
<dbReference type="Pfam" id="PF00294">
    <property type="entry name" value="PfkB"/>
    <property type="match status" value="1"/>
</dbReference>
<dbReference type="SUPFAM" id="SSF52374">
    <property type="entry name" value="Nucleotidylyl transferase"/>
    <property type="match status" value="1"/>
</dbReference>
<dbReference type="SUPFAM" id="SSF53613">
    <property type="entry name" value="Ribokinase-like"/>
    <property type="match status" value="1"/>
</dbReference>
<dbReference type="PROSITE" id="PS00583">
    <property type="entry name" value="PFKB_KINASES_1"/>
    <property type="match status" value="1"/>
</dbReference>
<comment type="function">
    <text evidence="1">Catalyzes the phosphorylation of D-glycero-D-manno-heptose 7-phosphate at the C-1 position to selectively form D-glycero-beta-D-manno-heptose-1,7-bisphosphate.</text>
</comment>
<comment type="function">
    <text evidence="1">Catalyzes the ADP transfer from ATP to D-glycero-beta-D-manno-heptose 1-phosphate, yielding ADP-D-glycero-beta-D-manno-heptose.</text>
</comment>
<comment type="catalytic activity">
    <reaction evidence="1">
        <text>D-glycero-beta-D-manno-heptose 7-phosphate + ATP = D-glycero-beta-D-manno-heptose 1,7-bisphosphate + ADP + H(+)</text>
        <dbReference type="Rhea" id="RHEA:27473"/>
        <dbReference type="ChEBI" id="CHEBI:15378"/>
        <dbReference type="ChEBI" id="CHEBI:30616"/>
        <dbReference type="ChEBI" id="CHEBI:60204"/>
        <dbReference type="ChEBI" id="CHEBI:60208"/>
        <dbReference type="ChEBI" id="CHEBI:456216"/>
        <dbReference type="EC" id="2.7.1.167"/>
    </reaction>
</comment>
<comment type="catalytic activity">
    <reaction evidence="1">
        <text>D-glycero-beta-D-manno-heptose 1-phosphate + ATP + H(+) = ADP-D-glycero-beta-D-manno-heptose + diphosphate</text>
        <dbReference type="Rhea" id="RHEA:27465"/>
        <dbReference type="ChEBI" id="CHEBI:15378"/>
        <dbReference type="ChEBI" id="CHEBI:30616"/>
        <dbReference type="ChEBI" id="CHEBI:33019"/>
        <dbReference type="ChEBI" id="CHEBI:59967"/>
        <dbReference type="ChEBI" id="CHEBI:61593"/>
        <dbReference type="EC" id="2.7.7.70"/>
    </reaction>
</comment>
<comment type="pathway">
    <text evidence="1">Nucleotide-sugar biosynthesis; ADP-L-glycero-beta-D-manno-heptose biosynthesis; ADP-L-glycero-beta-D-manno-heptose from D-glycero-beta-D-manno-heptose 7-phosphate: step 1/4.</text>
</comment>
<comment type="pathway">
    <text evidence="1">Nucleotide-sugar biosynthesis; ADP-L-glycero-beta-D-manno-heptose biosynthesis; ADP-L-glycero-beta-D-manno-heptose from D-glycero-beta-D-manno-heptose 7-phosphate: step 3/4.</text>
</comment>
<comment type="subunit">
    <text evidence="1">Homodimer.</text>
</comment>
<comment type="similarity">
    <text evidence="1">In the N-terminal section; belongs to the carbohydrate kinase PfkB family.</text>
</comment>
<comment type="similarity">
    <text evidence="1">In the C-terminal section; belongs to the cytidylyltransferase family.</text>
</comment>